<dbReference type="EC" id="2.7.11.2" evidence="10"/>
<dbReference type="EMBL" id="AF267660">
    <property type="protein sequence ID" value="AAF72038.1"/>
    <property type="molecule type" value="mRNA"/>
</dbReference>
<dbReference type="EMBL" id="AL606480">
    <property type="status" value="NOT_ANNOTATED_CDS"/>
    <property type="molecule type" value="Genomic_DNA"/>
</dbReference>
<dbReference type="EMBL" id="CH466556">
    <property type="protein sequence ID" value="EDL15963.1"/>
    <property type="molecule type" value="Genomic_DNA"/>
</dbReference>
<dbReference type="EMBL" id="BC021764">
    <property type="protein sequence ID" value="AAH21764.1"/>
    <property type="molecule type" value="mRNA"/>
</dbReference>
<dbReference type="CCDS" id="CCDS25270.1"/>
<dbReference type="RefSeq" id="NP_598428.2">
    <property type="nucleotide sequence ID" value="NM_133667.2"/>
</dbReference>
<dbReference type="SMR" id="Q9JK42"/>
<dbReference type="BioGRID" id="202096">
    <property type="interactions" value="14"/>
</dbReference>
<dbReference type="FunCoup" id="Q9JK42">
    <property type="interactions" value="2221"/>
</dbReference>
<dbReference type="IntAct" id="Q9JK42">
    <property type="interactions" value="3"/>
</dbReference>
<dbReference type="STRING" id="10090.ENSMUSP00000041447"/>
<dbReference type="ChEMBL" id="CHEMBL5465359"/>
<dbReference type="GlyGen" id="Q9JK42">
    <property type="glycosylation" value="2 sites, 1 N-linked glycan (1 site), 1 O-linked glycan (1 site)"/>
</dbReference>
<dbReference type="iPTMnet" id="Q9JK42"/>
<dbReference type="PhosphoSitePlus" id="Q9JK42"/>
<dbReference type="SwissPalm" id="Q9JK42"/>
<dbReference type="jPOST" id="Q9JK42"/>
<dbReference type="PaxDb" id="10090-ENSMUSP00000041447"/>
<dbReference type="PeptideAtlas" id="Q9JK42"/>
<dbReference type="ProteomicsDB" id="294050"/>
<dbReference type="Pumba" id="Q9JK42"/>
<dbReference type="Antibodypedia" id="1630">
    <property type="antibodies" value="537 antibodies from 35 providers"/>
</dbReference>
<dbReference type="DNASU" id="18604"/>
<dbReference type="Ensembl" id="ENSMUST00000038431.8">
    <property type="protein sequence ID" value="ENSMUSP00000041447.8"/>
    <property type="gene ID" value="ENSMUSG00000038967.14"/>
</dbReference>
<dbReference type="GeneID" id="18604"/>
<dbReference type="KEGG" id="mmu:18604"/>
<dbReference type="UCSC" id="uc007kzu.2">
    <property type="organism name" value="mouse"/>
</dbReference>
<dbReference type="AGR" id="MGI:1343087"/>
<dbReference type="CTD" id="5164"/>
<dbReference type="MGI" id="MGI:1343087">
    <property type="gene designation" value="Pdk2"/>
</dbReference>
<dbReference type="VEuPathDB" id="HostDB:ENSMUSG00000038967"/>
<dbReference type="eggNOG" id="KOG0787">
    <property type="taxonomic scope" value="Eukaryota"/>
</dbReference>
<dbReference type="GeneTree" id="ENSGT01030000234646"/>
<dbReference type="HOGENOM" id="CLU_023861_1_1_1"/>
<dbReference type="InParanoid" id="Q9JK42"/>
<dbReference type="OMA" id="DMSRNAP"/>
<dbReference type="OrthoDB" id="241648at2759"/>
<dbReference type="PhylomeDB" id="Q9JK42"/>
<dbReference type="TreeFam" id="TF314918"/>
<dbReference type="BRENDA" id="2.7.11.2">
    <property type="organism ID" value="3474"/>
</dbReference>
<dbReference type="Reactome" id="R-MMU-204174">
    <property type="pathway name" value="Regulation of pyruvate dehydrogenase (PDH) complex"/>
</dbReference>
<dbReference type="Reactome" id="R-MMU-5362517">
    <property type="pathway name" value="Signaling by Retinoic Acid"/>
</dbReference>
<dbReference type="BioGRID-ORCS" id="18604">
    <property type="hits" value="3 hits in 78 CRISPR screens"/>
</dbReference>
<dbReference type="ChiTaRS" id="Pdk2">
    <property type="organism name" value="mouse"/>
</dbReference>
<dbReference type="PRO" id="PR:Q9JK42"/>
<dbReference type="Proteomes" id="UP000000589">
    <property type="component" value="Chromosome 11"/>
</dbReference>
<dbReference type="RNAct" id="Q9JK42">
    <property type="molecule type" value="protein"/>
</dbReference>
<dbReference type="Bgee" id="ENSMUSG00000038967">
    <property type="expression patterns" value="Expressed in interventricular septum and 192 other cell types or tissues"/>
</dbReference>
<dbReference type="GO" id="GO:0005829">
    <property type="term" value="C:cytosol"/>
    <property type="evidence" value="ECO:0007669"/>
    <property type="project" value="Ensembl"/>
</dbReference>
<dbReference type="GO" id="GO:0005759">
    <property type="term" value="C:mitochondrial matrix"/>
    <property type="evidence" value="ECO:0007669"/>
    <property type="project" value="UniProtKB-SubCell"/>
</dbReference>
<dbReference type="GO" id="GO:0005739">
    <property type="term" value="C:mitochondrion"/>
    <property type="evidence" value="ECO:0000314"/>
    <property type="project" value="UniProtKB"/>
</dbReference>
<dbReference type="GO" id="GO:0005654">
    <property type="term" value="C:nucleoplasm"/>
    <property type="evidence" value="ECO:0007669"/>
    <property type="project" value="Ensembl"/>
</dbReference>
<dbReference type="GO" id="GO:0045254">
    <property type="term" value="C:pyruvate dehydrogenase complex"/>
    <property type="evidence" value="ECO:0000314"/>
    <property type="project" value="UniProtKB"/>
</dbReference>
<dbReference type="GO" id="GO:0005524">
    <property type="term" value="F:ATP binding"/>
    <property type="evidence" value="ECO:0007669"/>
    <property type="project" value="UniProtKB-KW"/>
</dbReference>
<dbReference type="GO" id="GO:0042803">
    <property type="term" value="F:protein homodimerization activity"/>
    <property type="evidence" value="ECO:0007669"/>
    <property type="project" value="Ensembl"/>
</dbReference>
<dbReference type="GO" id="GO:0004740">
    <property type="term" value="F:pyruvate dehydrogenase (acetyl-transferring) kinase activity"/>
    <property type="evidence" value="ECO:0000315"/>
    <property type="project" value="UniProtKB"/>
</dbReference>
<dbReference type="GO" id="GO:0031670">
    <property type="term" value="P:cellular response to nutrient"/>
    <property type="evidence" value="ECO:0000315"/>
    <property type="project" value="UniProtKB"/>
</dbReference>
<dbReference type="GO" id="GO:0034614">
    <property type="term" value="P:cellular response to reactive oxygen species"/>
    <property type="evidence" value="ECO:0007669"/>
    <property type="project" value="Ensembl"/>
</dbReference>
<dbReference type="GO" id="GO:0042593">
    <property type="term" value="P:glucose homeostasis"/>
    <property type="evidence" value="ECO:0000315"/>
    <property type="project" value="UniProtKB"/>
</dbReference>
<dbReference type="GO" id="GO:0008286">
    <property type="term" value="P:insulin receptor signaling pathway"/>
    <property type="evidence" value="ECO:0000315"/>
    <property type="project" value="UniProtKB"/>
</dbReference>
<dbReference type="GO" id="GO:0072332">
    <property type="term" value="P:intrinsic apoptotic signaling pathway by p53 class mediator"/>
    <property type="evidence" value="ECO:0007669"/>
    <property type="project" value="Ensembl"/>
</dbReference>
<dbReference type="GO" id="GO:0010510">
    <property type="term" value="P:regulation of acetyl-CoA biosynthetic process from pyruvate"/>
    <property type="evidence" value="ECO:0000315"/>
    <property type="project" value="UniProtKB"/>
</dbReference>
<dbReference type="GO" id="GO:0050848">
    <property type="term" value="P:regulation of calcium-mediated signaling"/>
    <property type="evidence" value="ECO:0000315"/>
    <property type="project" value="MGI"/>
</dbReference>
<dbReference type="GO" id="GO:0006111">
    <property type="term" value="P:regulation of gluconeogenesis"/>
    <property type="evidence" value="ECO:0000315"/>
    <property type="project" value="UniProtKB"/>
</dbReference>
<dbReference type="GO" id="GO:0010906">
    <property type="term" value="P:regulation of glucose metabolic process"/>
    <property type="evidence" value="ECO:0000315"/>
    <property type="project" value="UniProtKB"/>
</dbReference>
<dbReference type="GO" id="GO:0010565">
    <property type="term" value="P:regulation of ketone metabolic process"/>
    <property type="evidence" value="ECO:0000315"/>
    <property type="project" value="UniProtKB"/>
</dbReference>
<dbReference type="GO" id="GO:0006885">
    <property type="term" value="P:regulation of pH"/>
    <property type="evidence" value="ECO:0000315"/>
    <property type="project" value="UniProtKB"/>
</dbReference>
<dbReference type="CDD" id="cd16929">
    <property type="entry name" value="HATPase_PDK-like"/>
    <property type="match status" value="1"/>
</dbReference>
<dbReference type="FunFam" id="1.20.140.20:FF:000001">
    <property type="entry name" value="[Pyruvate dehydrogenase (acetyl-transferring)] kinase isozyme 2, mitochondrial"/>
    <property type="match status" value="1"/>
</dbReference>
<dbReference type="FunFam" id="3.30.565.10:FF:000007">
    <property type="entry name" value="Mitochondrial pyruvate dehydrogenase kinase isoform 2"/>
    <property type="match status" value="1"/>
</dbReference>
<dbReference type="Gene3D" id="1.20.140.20">
    <property type="entry name" value="Alpha-ketoacid/pyruvate dehydrogenase kinase, N-terminal domain"/>
    <property type="match status" value="1"/>
</dbReference>
<dbReference type="Gene3D" id="3.30.565.10">
    <property type="entry name" value="Histidine kinase-like ATPase, C-terminal domain"/>
    <property type="match status" value="1"/>
</dbReference>
<dbReference type="InterPro" id="IPR036784">
    <property type="entry name" value="AK/P_DHK_N_sf"/>
</dbReference>
<dbReference type="InterPro" id="IPR018955">
    <property type="entry name" value="BCDHK/PDK_N"/>
</dbReference>
<dbReference type="InterPro" id="IPR039028">
    <property type="entry name" value="BCKD/PDK"/>
</dbReference>
<dbReference type="InterPro" id="IPR036890">
    <property type="entry name" value="HATPase_C_sf"/>
</dbReference>
<dbReference type="InterPro" id="IPR005467">
    <property type="entry name" value="His_kinase_dom"/>
</dbReference>
<dbReference type="PANTHER" id="PTHR11947:SF15">
    <property type="entry name" value="[PYRUVATE DEHYDROGENASE (ACETYL-TRANSFERRING)] KINASE ISOZYME 2, MITOCHONDRIAL"/>
    <property type="match status" value="1"/>
</dbReference>
<dbReference type="PANTHER" id="PTHR11947">
    <property type="entry name" value="PYRUVATE DEHYDROGENASE KINASE"/>
    <property type="match status" value="1"/>
</dbReference>
<dbReference type="Pfam" id="PF10436">
    <property type="entry name" value="BCDHK_Adom3"/>
    <property type="match status" value="1"/>
</dbReference>
<dbReference type="Pfam" id="PF02518">
    <property type="entry name" value="HATPase_c"/>
    <property type="match status" value="1"/>
</dbReference>
<dbReference type="SMART" id="SM00387">
    <property type="entry name" value="HATPase_c"/>
    <property type="match status" value="1"/>
</dbReference>
<dbReference type="SUPFAM" id="SSF69012">
    <property type="entry name" value="alpha-ketoacid dehydrogenase kinase, N-terminal domain"/>
    <property type="match status" value="1"/>
</dbReference>
<dbReference type="SUPFAM" id="SSF55874">
    <property type="entry name" value="ATPase domain of HSP90 chaperone/DNA topoisomerase II/histidine kinase"/>
    <property type="match status" value="1"/>
</dbReference>
<dbReference type="PROSITE" id="PS50109">
    <property type="entry name" value="HIS_KIN"/>
    <property type="match status" value="1"/>
</dbReference>
<sequence>MRWVRALLKNASLAGAPKYIEHFSKFSPSPLSMKQFLDFGSSNACEKTSFTFLRQELPVRLANIMKEINLLPDRVLGTPSVQLVQSWYVQSLLDIMEFLDKDPEDHRTLSQFTDALVTIRNRHNDVVPTMAQGVLEYKDTYGDDPVSNQNIQYFLDRFYLSRISIRMLINQHTLIFDGSTNPAHPKHIGSIDPNCSVSDVVKDAYDMAKLLCDKYYMASPDLEIQEVNATNANQPIHMVYVPSHLYHMLFELFKNAMRATVESHESSLTLPPIKIMVALGEEDLSIKMSDRGGGVPLRKIERLFSYMYSTAPTPQPGTGGTPLAGFGYGLPISRLYAKYFQGDLQLFSMEGFGTDAVIYLKALSTDSVERLPVYNKSAWRHYQTIQEAGDWCVPSTEPKNTSTYRVS</sequence>
<feature type="transit peptide" description="Mitochondrion" evidence="4">
    <location>
        <begin position="1"/>
        <end status="unknown"/>
    </location>
</feature>
<feature type="chain" id="PRO_0000023441" description="[Pyruvate dehydrogenase (acetyl-transferring)] kinase isozyme 2, mitochondrial">
    <location>
        <begin status="unknown"/>
        <end position="407"/>
    </location>
</feature>
<feature type="domain" description="Histidine kinase" evidence="5">
    <location>
        <begin position="135"/>
        <end position="364"/>
    </location>
</feature>
<feature type="binding site" evidence="1">
    <location>
        <begin position="251"/>
        <end position="258"/>
    </location>
    <ligand>
        <name>ATP</name>
        <dbReference type="ChEBI" id="CHEBI:30616"/>
    </ligand>
</feature>
<feature type="binding site" evidence="1">
    <location>
        <position position="290"/>
    </location>
    <ligand>
        <name>ATP</name>
        <dbReference type="ChEBI" id="CHEBI:30616"/>
    </ligand>
</feature>
<feature type="binding site" evidence="1">
    <location>
        <begin position="309"/>
        <end position="310"/>
    </location>
    <ligand>
        <name>ATP</name>
        <dbReference type="ChEBI" id="CHEBI:30616"/>
    </ligand>
</feature>
<feature type="binding site" evidence="1">
    <location>
        <begin position="325"/>
        <end position="330"/>
    </location>
    <ligand>
        <name>ATP</name>
        <dbReference type="ChEBI" id="CHEBI:30616"/>
    </ligand>
</feature>
<feature type="modified residue" description="Phosphotyrosine" evidence="2">
    <location>
        <position position="215"/>
    </location>
</feature>
<feature type="modified residue" description="Phosphotyrosine" evidence="2">
    <location>
        <position position="216"/>
    </location>
</feature>
<feature type="modified residue" description="N6-succinyllysine" evidence="3">
    <location>
        <position position="376"/>
    </location>
</feature>
<feature type="sequence conflict" description="In Ref. 1; AAF72038." evidence="11" ref="1">
    <original>K</original>
    <variation>R</variation>
    <location>
        <position position="299"/>
    </location>
</feature>
<protein>
    <recommendedName>
        <fullName>[Pyruvate dehydrogenase (acetyl-transferring)] kinase isozyme 2, mitochondrial</fullName>
        <ecNumber evidence="10">2.7.11.2</ecNumber>
    </recommendedName>
    <alternativeName>
        <fullName>Pyruvate dehydrogenase kinase isoform 2</fullName>
        <shortName>PDH kinase 2</shortName>
    </alternativeName>
</protein>
<organism>
    <name type="scientific">Mus musculus</name>
    <name type="common">Mouse</name>
    <dbReference type="NCBI Taxonomy" id="10090"/>
    <lineage>
        <taxon>Eukaryota</taxon>
        <taxon>Metazoa</taxon>
        <taxon>Chordata</taxon>
        <taxon>Craniata</taxon>
        <taxon>Vertebrata</taxon>
        <taxon>Euteleostomi</taxon>
        <taxon>Mammalia</taxon>
        <taxon>Eutheria</taxon>
        <taxon>Euarchontoglires</taxon>
        <taxon>Glires</taxon>
        <taxon>Rodentia</taxon>
        <taxon>Myomorpha</taxon>
        <taxon>Muroidea</taxon>
        <taxon>Muridae</taxon>
        <taxon>Murinae</taxon>
        <taxon>Mus</taxon>
        <taxon>Mus</taxon>
    </lineage>
</organism>
<reference key="1">
    <citation type="submission" date="2000-05" db="EMBL/GenBank/DDBJ databases">
        <title>Mus musculus pyruvate dehydrogenase kinase 2 cDNA.</title>
        <authorList>
            <person name="Jeoung N.H."/>
            <person name="Harris R.A."/>
        </authorList>
    </citation>
    <scope>NUCLEOTIDE SEQUENCE [MRNA]</scope>
    <source>
        <strain>C57BL/6J</strain>
    </source>
</reference>
<reference key="2">
    <citation type="journal article" date="2009" name="PLoS Biol.">
        <title>Lineage-specific biology revealed by a finished genome assembly of the mouse.</title>
        <authorList>
            <person name="Church D.M."/>
            <person name="Goodstadt L."/>
            <person name="Hillier L.W."/>
            <person name="Zody M.C."/>
            <person name="Goldstein S."/>
            <person name="She X."/>
            <person name="Bult C.J."/>
            <person name="Agarwala R."/>
            <person name="Cherry J.L."/>
            <person name="DiCuccio M."/>
            <person name="Hlavina W."/>
            <person name="Kapustin Y."/>
            <person name="Meric P."/>
            <person name="Maglott D."/>
            <person name="Birtle Z."/>
            <person name="Marques A.C."/>
            <person name="Graves T."/>
            <person name="Zhou S."/>
            <person name="Teague B."/>
            <person name="Potamousis K."/>
            <person name="Churas C."/>
            <person name="Place M."/>
            <person name="Herschleb J."/>
            <person name="Runnheim R."/>
            <person name="Forrest D."/>
            <person name="Amos-Landgraf J."/>
            <person name="Schwartz D.C."/>
            <person name="Cheng Z."/>
            <person name="Lindblad-Toh K."/>
            <person name="Eichler E.E."/>
            <person name="Ponting C.P."/>
        </authorList>
    </citation>
    <scope>NUCLEOTIDE SEQUENCE [LARGE SCALE GENOMIC DNA]</scope>
    <source>
        <strain>C57BL/6J</strain>
    </source>
</reference>
<reference key="3">
    <citation type="submission" date="2005-07" db="EMBL/GenBank/DDBJ databases">
        <authorList>
            <person name="Mural R.J."/>
            <person name="Adams M.D."/>
            <person name="Myers E.W."/>
            <person name="Smith H.O."/>
            <person name="Venter J.C."/>
        </authorList>
    </citation>
    <scope>NUCLEOTIDE SEQUENCE [LARGE SCALE GENOMIC DNA]</scope>
</reference>
<reference key="4">
    <citation type="journal article" date="2004" name="Genome Res.">
        <title>The status, quality, and expansion of the NIH full-length cDNA project: the Mammalian Gene Collection (MGC).</title>
        <authorList>
            <consortium name="The MGC Project Team"/>
        </authorList>
    </citation>
    <scope>NUCLEOTIDE SEQUENCE [LARGE SCALE MRNA]</scope>
    <source>
        <tissue>Mammary tumor</tissue>
    </source>
</reference>
<reference key="5">
    <citation type="journal article" date="2006" name="Biochem. Biophys. Res. Commun.">
        <title>Regulation of PDK mRNA by high fatty acid and glucose in pancreatic islets.</title>
        <authorList>
            <person name="Xu J."/>
            <person name="Han J."/>
            <person name="Epstein P.N."/>
            <person name="Liu Y.Q."/>
        </authorList>
    </citation>
    <scope>INDUCTION BY PALMITATE AND GLUCOSE</scope>
</reference>
<reference key="6">
    <citation type="journal article" date="2007" name="J. Mol. Biol.">
        <title>Three members of the human pyruvate dehydrogenase kinase gene family are direct targets of the peroxisome proliferator-activated receptor beta/delta.</title>
        <authorList>
            <person name="Degenhardt T."/>
            <person name="Saramaki A."/>
            <person name="Malinen M."/>
            <person name="Rieck M."/>
            <person name="Vaisanen S."/>
            <person name="Huotari A."/>
            <person name="Herzig K.H."/>
            <person name="Muller R."/>
            <person name="Carlberg C."/>
        </authorList>
    </citation>
    <scope>INDUCTION BY PPARD</scope>
</reference>
<reference key="7">
    <citation type="journal article" date="2010" name="Cell">
        <title>A tissue-specific atlas of mouse protein phosphorylation and expression.</title>
        <authorList>
            <person name="Huttlin E.L."/>
            <person name="Jedrychowski M.P."/>
            <person name="Elias J.E."/>
            <person name="Goswami T."/>
            <person name="Rad R."/>
            <person name="Beausoleil S.A."/>
            <person name="Villen J."/>
            <person name="Haas W."/>
            <person name="Sowa M.E."/>
            <person name="Gygi S.P."/>
        </authorList>
    </citation>
    <scope>IDENTIFICATION BY MASS SPECTROMETRY [LARGE SCALE ANALYSIS]</scope>
    <source>
        <tissue>Brain</tissue>
        <tissue>Brown adipose tissue</tissue>
        <tissue>Heart</tissue>
        <tissue>Kidney</tissue>
        <tissue>Lung</tissue>
        <tissue>Pancreas</tissue>
    </source>
</reference>
<reference key="8">
    <citation type="journal article" date="2011" name="Am. J. Physiol.">
        <title>PDH activation during in vitro muscle contractions in PDH kinase 2 knockout mice: effect of PDH kinase 1 compensation.</title>
        <authorList>
            <person name="Dunford E.C."/>
            <person name="Herbst E.A."/>
            <person name="Jeoung N.H."/>
            <person name="Gittings W."/>
            <person name="Inglis J.G."/>
            <person name="Vandenboom R."/>
            <person name="LeBlanc P.J."/>
            <person name="Harris R.A."/>
            <person name="Peters S.J."/>
        </authorList>
    </citation>
    <scope>DISRUPTION PHENOTYPE</scope>
</reference>
<reference key="9">
    <citation type="journal article" date="2011" name="Mol. Genet. Metab.">
        <title>Induction of PDK4 in the heart muscle of JVS mice, an animal model of systemic carnitine deficiency, does not appear to reduce glucose utilization by the heart.</title>
        <authorList>
            <person name="Ushikai M."/>
            <person name="Horiuchi M."/>
            <person name="Kobayashi K."/>
            <person name="Matuda S."/>
            <person name="Inui A."/>
            <person name="Takeuchi T."/>
            <person name="Saheki T."/>
        </authorList>
    </citation>
    <scope>SUBUNIT</scope>
    <scope>SUBCELLULAR LOCATION</scope>
    <scope>TISSUE SPECIFICITY</scope>
</reference>
<reference key="10">
    <citation type="journal article" date="2012" name="Biochem. J.">
        <title>Fasting induces ketoacidosis and hypothermia in PDHK2/PDHK4-double-knockout mice.</title>
        <authorList>
            <person name="Jeoung N.H."/>
            <person name="Rahimi Y."/>
            <person name="Wu P."/>
            <person name="Lee W.N."/>
            <person name="Harris R.A."/>
        </authorList>
    </citation>
    <scope>DISRUPTION PHENOTYPE</scope>
    <scope>FUNCTION</scope>
    <scope>CATALYTIC ACTIVITY</scope>
</reference>
<accession>Q9JK42</accession>
<accession>Q8VC63</accession>
<name>PDK2_MOUSE</name>
<gene>
    <name type="primary">Pdk2</name>
</gene>
<comment type="function">
    <text evidence="10">Kinase that plays a key role in the regulation of glucose and fatty acid metabolism and homeostasis via phosphorylation of the pyruvate dehydrogenase subunits PDHA1 and PDHA2 (PubMed:22360721). This inhibits pyruvate dehydrogenase activity, and thereby regulates metabolite flux through the tricarboxylic acid cycle, down-regulates aerobic respiration and inhibits the formation of acetyl-coenzyme A from pyruvate. Inhibition of pyruvate dehydrogenase decreases glucose utilization and increases fat metabolism. Mediates cellular responses to insulin. Plays an important role in maintaining normal blood glucose levels and in metabolic adaptation to nutrient availability. Via its regulation of pyruvate dehydrogenase activity, plays an important role in maintaining normal blood pH and in preventing the accumulation of ketone bodies under starvation. Plays a role in the regulation of cell proliferation and in resistance to apoptosis under oxidative stress. Plays a role in p53/TP53-mediated apoptosis.</text>
</comment>
<comment type="catalytic activity">
    <reaction evidence="10">
        <text>L-seryl-[pyruvate dehydrogenase E1 alpha subunit] + ATP = O-phospho-L-seryl-[pyruvate dehydrogenase E1 alpha subunit] + ADP + H(+)</text>
        <dbReference type="Rhea" id="RHEA:23052"/>
        <dbReference type="Rhea" id="RHEA-COMP:13689"/>
        <dbReference type="Rhea" id="RHEA-COMP:13690"/>
        <dbReference type="ChEBI" id="CHEBI:15378"/>
        <dbReference type="ChEBI" id="CHEBI:29999"/>
        <dbReference type="ChEBI" id="CHEBI:30616"/>
        <dbReference type="ChEBI" id="CHEBI:83421"/>
        <dbReference type="ChEBI" id="CHEBI:456216"/>
        <dbReference type="EC" id="2.7.11.2"/>
    </reaction>
    <physiologicalReaction direction="left-to-right" evidence="12">
        <dbReference type="Rhea" id="RHEA:23053"/>
    </physiologicalReaction>
</comment>
<comment type="subunit">
    <text evidence="8">Homodimer, and heterodimer with PDK1. Interacts with the pyruvate dehydrogenase complex subunit DLAT, and is part of the multimeric pyruvate dehydrogenase complex that contains multiple copies of pyruvate dehydrogenase (E1), dihydrolipoamide acetyltransferase (DLAT, E2) and lipoamide dehydrogenase (DLD, E3).</text>
</comment>
<comment type="interaction">
    <interactant intactId="EBI-643530">
        <id>Q9JK42</id>
    </interactant>
    <interactant intactId="EBI-643570">
        <id>O08908</id>
        <label>Pik3r2</label>
    </interactant>
    <organismsDiffer>false</organismsDiffer>
    <experiments>3</experiments>
</comment>
<comment type="subcellular location">
    <subcellularLocation>
        <location evidence="8">Mitochondrion matrix</location>
    </subcellularLocation>
</comment>
<comment type="tissue specificity">
    <text evidence="8">Detected in heart (at protein level).</text>
</comment>
<comment type="induction">
    <text evidence="6 7">Up-regulated by glucose and palmitic acid. Up-regulated by PPARD.</text>
</comment>
<comment type="disruption phenotype">
    <text evidence="9 10">No visible phenotype, due to the fact that PDK2-deficient mice have increased PDK1 levels (PubMed:21411764). Mice have lower blood glucose levels in the fed state, but not after fasting. Likewise, they display increased pyruvate dehydrogenase activity in liver and skeletal muscle in the fed state, but not after fasting. Fasting mice lacking both PDK2 and PDK4 show strongly decreased blood glucose levels, increased circulating ketone body levels leading to ketoacidosis with dangerously low blood pH levels, hypothermia, and ultimately death (PubMed:22360721).</text>
</comment>
<comment type="similarity">
    <text evidence="11">Belongs to the PDK/BCKDK protein kinase family.</text>
</comment>
<evidence type="ECO:0000250" key="1"/>
<evidence type="ECO:0000250" key="2">
    <source>
        <dbReference type="UniProtKB" id="Q15118"/>
    </source>
</evidence>
<evidence type="ECO:0000250" key="3">
    <source>
        <dbReference type="UniProtKB" id="Q8BFP9"/>
    </source>
</evidence>
<evidence type="ECO:0000255" key="4"/>
<evidence type="ECO:0000255" key="5">
    <source>
        <dbReference type="PROSITE-ProRule" id="PRU00107"/>
    </source>
</evidence>
<evidence type="ECO:0000269" key="6">
    <source>
    </source>
</evidence>
<evidence type="ECO:0000269" key="7">
    <source>
    </source>
</evidence>
<evidence type="ECO:0000269" key="8">
    <source>
    </source>
</evidence>
<evidence type="ECO:0000269" key="9">
    <source>
    </source>
</evidence>
<evidence type="ECO:0000269" key="10">
    <source>
    </source>
</evidence>
<evidence type="ECO:0000305" key="11"/>
<evidence type="ECO:0000305" key="12">
    <source>
    </source>
</evidence>
<keyword id="KW-0067">ATP-binding</keyword>
<keyword id="KW-0418">Kinase</keyword>
<keyword id="KW-0496">Mitochondrion</keyword>
<keyword id="KW-0547">Nucleotide-binding</keyword>
<keyword id="KW-0597">Phosphoprotein</keyword>
<keyword id="KW-1185">Reference proteome</keyword>
<keyword id="KW-0808">Transferase</keyword>
<keyword id="KW-0809">Transit peptide</keyword>
<proteinExistence type="evidence at protein level"/>